<keyword id="KW-0067">ATP-binding</keyword>
<keyword id="KW-0963">Cytoplasm</keyword>
<keyword id="KW-0418">Kinase</keyword>
<keyword id="KW-0460">Magnesium</keyword>
<keyword id="KW-0479">Metal-binding</keyword>
<keyword id="KW-0546">Nucleotide metabolism</keyword>
<keyword id="KW-0547">Nucleotide-binding</keyword>
<keyword id="KW-0597">Phosphoprotein</keyword>
<keyword id="KW-1185">Reference proteome</keyword>
<keyword id="KW-0808">Transferase</keyword>
<comment type="function">
    <text evidence="1">Major role in the synthesis of nucleoside triphosphates other than ATP. The ATP gamma phosphate is transferred to the NDP beta phosphate via a ping-pong mechanism, using a phosphorylated active-site intermediate.</text>
</comment>
<comment type="catalytic activity">
    <reaction evidence="1">
        <text>a 2'-deoxyribonucleoside 5'-diphosphate + ATP = a 2'-deoxyribonucleoside 5'-triphosphate + ADP</text>
        <dbReference type="Rhea" id="RHEA:44640"/>
        <dbReference type="ChEBI" id="CHEBI:30616"/>
        <dbReference type="ChEBI" id="CHEBI:61560"/>
        <dbReference type="ChEBI" id="CHEBI:73316"/>
        <dbReference type="ChEBI" id="CHEBI:456216"/>
        <dbReference type="EC" id="2.7.4.6"/>
    </reaction>
</comment>
<comment type="catalytic activity">
    <reaction evidence="1">
        <text>a ribonucleoside 5'-diphosphate + ATP = a ribonucleoside 5'-triphosphate + ADP</text>
        <dbReference type="Rhea" id="RHEA:18113"/>
        <dbReference type="ChEBI" id="CHEBI:30616"/>
        <dbReference type="ChEBI" id="CHEBI:57930"/>
        <dbReference type="ChEBI" id="CHEBI:61557"/>
        <dbReference type="ChEBI" id="CHEBI:456216"/>
        <dbReference type="EC" id="2.7.4.6"/>
    </reaction>
</comment>
<comment type="cofactor">
    <cofactor evidence="1">
        <name>Mg(2+)</name>
        <dbReference type="ChEBI" id="CHEBI:18420"/>
    </cofactor>
</comment>
<comment type="subcellular location">
    <subcellularLocation>
        <location evidence="1">Cytoplasm</location>
    </subcellularLocation>
</comment>
<comment type="similarity">
    <text evidence="1">Belongs to the NDK family.</text>
</comment>
<organism>
    <name type="scientific">Halorubrum lacusprofundi (strain ATCC 49239 / DSM 5036 / JCM 8891 / ACAM 34)</name>
    <dbReference type="NCBI Taxonomy" id="416348"/>
    <lineage>
        <taxon>Archaea</taxon>
        <taxon>Methanobacteriati</taxon>
        <taxon>Methanobacteriota</taxon>
        <taxon>Stenosarchaea group</taxon>
        <taxon>Halobacteria</taxon>
        <taxon>Halobacteriales</taxon>
        <taxon>Haloferacaceae</taxon>
        <taxon>Halorubrum</taxon>
    </lineage>
</organism>
<name>NDK_HALLT</name>
<reference key="1">
    <citation type="journal article" date="2016" name="Stand. Genomic Sci.">
        <title>Complete genome sequence of the Antarctic Halorubrum lacusprofundi type strain ACAM 34.</title>
        <authorList>
            <person name="Anderson I.J."/>
            <person name="DasSarma P."/>
            <person name="Lucas S."/>
            <person name="Copeland A."/>
            <person name="Lapidus A."/>
            <person name="Del Rio T.G."/>
            <person name="Tice H."/>
            <person name="Dalin E."/>
            <person name="Bruce D.C."/>
            <person name="Goodwin L."/>
            <person name="Pitluck S."/>
            <person name="Sims D."/>
            <person name="Brettin T.S."/>
            <person name="Detter J.C."/>
            <person name="Han C.S."/>
            <person name="Larimer F."/>
            <person name="Hauser L."/>
            <person name="Land M."/>
            <person name="Ivanova N."/>
            <person name="Richardson P."/>
            <person name="Cavicchioli R."/>
            <person name="DasSarma S."/>
            <person name="Woese C.R."/>
            <person name="Kyrpides N.C."/>
        </authorList>
    </citation>
    <scope>NUCLEOTIDE SEQUENCE [LARGE SCALE GENOMIC DNA]</scope>
    <source>
        <strain>ATCC 49239 / DSM 5036 / JCM 8891 / ACAM 34</strain>
    </source>
</reference>
<gene>
    <name evidence="1" type="primary">ndk</name>
    <name type="ordered locus">Hlac_1845</name>
</gene>
<accession>B9LPY5</accession>
<proteinExistence type="inferred from homology"/>
<evidence type="ECO:0000255" key="1">
    <source>
        <dbReference type="HAMAP-Rule" id="MF_00451"/>
    </source>
</evidence>
<protein>
    <recommendedName>
        <fullName evidence="1">Nucleoside diphosphate kinase</fullName>
        <shortName evidence="1">NDK</shortName>
        <shortName evidence="1">NDP kinase</shortName>
        <ecNumber evidence="1">2.7.4.6</ecNumber>
    </recommendedName>
    <alternativeName>
        <fullName evidence="1">Nucleoside-2-P kinase</fullName>
    </alternativeName>
</protein>
<sequence>MSHHDERTFVMVKPDGVQRGLIGEIVSRFEERGLKLVGGKFMQIDEDLAHQHYGEHEGKPFFDGLVDFITSAPVFAMVWEGADATRQVRSMVGETDPAESAPGTIRGDFGLDLGQNVIHASDHEDEGANEREIDLFFDEEELVDYGLDTAAWVYEDEQH</sequence>
<feature type="chain" id="PRO_1000206213" description="Nucleoside diphosphate kinase">
    <location>
        <begin position="1"/>
        <end position="159"/>
    </location>
</feature>
<feature type="active site" description="Pros-phosphohistidine intermediate" evidence="1">
    <location>
        <position position="119"/>
    </location>
</feature>
<feature type="binding site" evidence="1">
    <location>
        <position position="13"/>
    </location>
    <ligand>
        <name>ATP</name>
        <dbReference type="ChEBI" id="CHEBI:30616"/>
    </ligand>
</feature>
<feature type="binding site" evidence="1">
    <location>
        <position position="61"/>
    </location>
    <ligand>
        <name>ATP</name>
        <dbReference type="ChEBI" id="CHEBI:30616"/>
    </ligand>
</feature>
<feature type="binding site" evidence="1">
    <location>
        <position position="89"/>
    </location>
    <ligand>
        <name>ATP</name>
        <dbReference type="ChEBI" id="CHEBI:30616"/>
    </ligand>
</feature>
<feature type="binding site" evidence="1">
    <location>
        <position position="95"/>
    </location>
    <ligand>
        <name>ATP</name>
        <dbReference type="ChEBI" id="CHEBI:30616"/>
    </ligand>
</feature>
<feature type="binding site" evidence="1">
    <location>
        <position position="106"/>
    </location>
    <ligand>
        <name>ATP</name>
        <dbReference type="ChEBI" id="CHEBI:30616"/>
    </ligand>
</feature>
<feature type="binding site" evidence="1">
    <location>
        <position position="116"/>
    </location>
    <ligand>
        <name>ATP</name>
        <dbReference type="ChEBI" id="CHEBI:30616"/>
    </ligand>
</feature>
<dbReference type="EC" id="2.7.4.6" evidence="1"/>
<dbReference type="EMBL" id="CP001365">
    <property type="protein sequence ID" value="ACM57423.1"/>
    <property type="molecule type" value="Genomic_DNA"/>
</dbReference>
<dbReference type="RefSeq" id="WP_015910553.1">
    <property type="nucleotide sequence ID" value="NC_012029.1"/>
</dbReference>
<dbReference type="SMR" id="B9LPY5"/>
<dbReference type="GeneID" id="7400037"/>
<dbReference type="KEGG" id="hla:Hlac_1845"/>
<dbReference type="eggNOG" id="arCOG04313">
    <property type="taxonomic scope" value="Archaea"/>
</dbReference>
<dbReference type="HOGENOM" id="CLU_060216_6_3_2"/>
<dbReference type="Proteomes" id="UP000000740">
    <property type="component" value="Chromosome 1"/>
</dbReference>
<dbReference type="GO" id="GO:0005737">
    <property type="term" value="C:cytoplasm"/>
    <property type="evidence" value="ECO:0007669"/>
    <property type="project" value="UniProtKB-SubCell"/>
</dbReference>
<dbReference type="GO" id="GO:0005524">
    <property type="term" value="F:ATP binding"/>
    <property type="evidence" value="ECO:0007669"/>
    <property type="project" value="UniProtKB-UniRule"/>
</dbReference>
<dbReference type="GO" id="GO:0046872">
    <property type="term" value="F:metal ion binding"/>
    <property type="evidence" value="ECO:0007669"/>
    <property type="project" value="UniProtKB-KW"/>
</dbReference>
<dbReference type="GO" id="GO:0004550">
    <property type="term" value="F:nucleoside diphosphate kinase activity"/>
    <property type="evidence" value="ECO:0007669"/>
    <property type="project" value="UniProtKB-UniRule"/>
</dbReference>
<dbReference type="GO" id="GO:0006241">
    <property type="term" value="P:CTP biosynthetic process"/>
    <property type="evidence" value="ECO:0007669"/>
    <property type="project" value="UniProtKB-UniRule"/>
</dbReference>
<dbReference type="GO" id="GO:0006183">
    <property type="term" value="P:GTP biosynthetic process"/>
    <property type="evidence" value="ECO:0007669"/>
    <property type="project" value="UniProtKB-UniRule"/>
</dbReference>
<dbReference type="GO" id="GO:0006228">
    <property type="term" value="P:UTP biosynthetic process"/>
    <property type="evidence" value="ECO:0007669"/>
    <property type="project" value="UniProtKB-UniRule"/>
</dbReference>
<dbReference type="CDD" id="cd04413">
    <property type="entry name" value="NDPk_I"/>
    <property type="match status" value="1"/>
</dbReference>
<dbReference type="FunFam" id="3.30.70.141:FF:000003">
    <property type="entry name" value="Nucleoside diphosphate kinase"/>
    <property type="match status" value="1"/>
</dbReference>
<dbReference type="Gene3D" id="3.30.70.141">
    <property type="entry name" value="Nucleoside diphosphate kinase-like domain"/>
    <property type="match status" value="1"/>
</dbReference>
<dbReference type="HAMAP" id="MF_00451">
    <property type="entry name" value="NDP_kinase"/>
    <property type="match status" value="1"/>
</dbReference>
<dbReference type="InterPro" id="IPR034907">
    <property type="entry name" value="NDK-like_dom"/>
</dbReference>
<dbReference type="InterPro" id="IPR036850">
    <property type="entry name" value="NDK-like_dom_sf"/>
</dbReference>
<dbReference type="InterPro" id="IPR001564">
    <property type="entry name" value="Nucleoside_diP_kinase"/>
</dbReference>
<dbReference type="NCBIfam" id="NF001908">
    <property type="entry name" value="PRK00668.1"/>
    <property type="match status" value="1"/>
</dbReference>
<dbReference type="PANTHER" id="PTHR11349">
    <property type="entry name" value="NUCLEOSIDE DIPHOSPHATE KINASE"/>
    <property type="match status" value="1"/>
</dbReference>
<dbReference type="Pfam" id="PF00334">
    <property type="entry name" value="NDK"/>
    <property type="match status" value="1"/>
</dbReference>
<dbReference type="PRINTS" id="PR01243">
    <property type="entry name" value="NUCDPKINASE"/>
</dbReference>
<dbReference type="SMART" id="SM00562">
    <property type="entry name" value="NDK"/>
    <property type="match status" value="1"/>
</dbReference>
<dbReference type="SUPFAM" id="SSF54919">
    <property type="entry name" value="Nucleoside diphosphate kinase, NDK"/>
    <property type="match status" value="1"/>
</dbReference>
<dbReference type="PROSITE" id="PS51374">
    <property type="entry name" value="NDPK_LIKE"/>
    <property type="match status" value="1"/>
</dbReference>